<gene>
    <name evidence="12" type="primary">Agbl3</name>
    <name evidence="8" type="synonym">Ccp3</name>
</gene>
<proteinExistence type="evidence at protein level"/>
<accession>Q8CDP0</accession>
<accession>B2RSY8</accession>
<accession>Q09M06</accession>
<accession>Q09M07</accession>
<accession>Q8BSW4</accession>
<accession>Q8R036</accession>
<protein>
    <recommendedName>
        <fullName evidence="9">Cytosolic carboxypeptidase 3</fullName>
        <ecNumber evidence="5">3.4.17.-</ecNumber>
    </recommendedName>
    <alternativeName>
        <fullName>ATP/GTP-binding protein-like 3</fullName>
    </alternativeName>
    <alternativeName>
        <fullName evidence="10">Protein deglutamylase CCP3</fullName>
    </alternativeName>
</protein>
<reference key="1">
    <citation type="journal article" date="2007" name="FASEB J.">
        <title>A novel subfamily of mouse cytosolic carboxypeptidases.</title>
        <authorList>
            <person name="Kalinina E."/>
            <person name="Biswas R."/>
            <person name="Berezniuk I."/>
            <person name="Hermoso A."/>
            <person name="Aviles F.X."/>
            <person name="Fricker L.D."/>
        </authorList>
    </citation>
    <scope>NUCLEOTIDE SEQUENCE [MRNA] (ISOFORMS 2 AND 3)</scope>
    <scope>TISSUE SPECIFICITY</scope>
    <scope>SUBCELLULAR LOCATION</scope>
    <source>
        <strain>C57BLKS/J</strain>
    </source>
</reference>
<reference key="2">
    <citation type="journal article" date="2005" name="Science">
        <title>The transcriptional landscape of the mammalian genome.</title>
        <authorList>
            <person name="Carninci P."/>
            <person name="Kasukawa T."/>
            <person name="Katayama S."/>
            <person name="Gough J."/>
            <person name="Frith M.C."/>
            <person name="Maeda N."/>
            <person name="Oyama R."/>
            <person name="Ravasi T."/>
            <person name="Lenhard B."/>
            <person name="Wells C."/>
            <person name="Kodzius R."/>
            <person name="Shimokawa K."/>
            <person name="Bajic V.B."/>
            <person name="Brenner S.E."/>
            <person name="Batalov S."/>
            <person name="Forrest A.R."/>
            <person name="Zavolan M."/>
            <person name="Davis M.J."/>
            <person name="Wilming L.G."/>
            <person name="Aidinis V."/>
            <person name="Allen J.E."/>
            <person name="Ambesi-Impiombato A."/>
            <person name="Apweiler R."/>
            <person name="Aturaliya R.N."/>
            <person name="Bailey T.L."/>
            <person name="Bansal M."/>
            <person name="Baxter L."/>
            <person name="Beisel K.W."/>
            <person name="Bersano T."/>
            <person name="Bono H."/>
            <person name="Chalk A.M."/>
            <person name="Chiu K.P."/>
            <person name="Choudhary V."/>
            <person name="Christoffels A."/>
            <person name="Clutterbuck D.R."/>
            <person name="Crowe M.L."/>
            <person name="Dalla E."/>
            <person name="Dalrymple B.P."/>
            <person name="de Bono B."/>
            <person name="Della Gatta G."/>
            <person name="di Bernardo D."/>
            <person name="Down T."/>
            <person name="Engstrom P."/>
            <person name="Fagiolini M."/>
            <person name="Faulkner G."/>
            <person name="Fletcher C.F."/>
            <person name="Fukushima T."/>
            <person name="Furuno M."/>
            <person name="Futaki S."/>
            <person name="Gariboldi M."/>
            <person name="Georgii-Hemming P."/>
            <person name="Gingeras T.R."/>
            <person name="Gojobori T."/>
            <person name="Green R.E."/>
            <person name="Gustincich S."/>
            <person name="Harbers M."/>
            <person name="Hayashi Y."/>
            <person name="Hensch T.K."/>
            <person name="Hirokawa N."/>
            <person name="Hill D."/>
            <person name="Huminiecki L."/>
            <person name="Iacono M."/>
            <person name="Ikeo K."/>
            <person name="Iwama A."/>
            <person name="Ishikawa T."/>
            <person name="Jakt M."/>
            <person name="Kanapin A."/>
            <person name="Katoh M."/>
            <person name="Kawasawa Y."/>
            <person name="Kelso J."/>
            <person name="Kitamura H."/>
            <person name="Kitano H."/>
            <person name="Kollias G."/>
            <person name="Krishnan S.P."/>
            <person name="Kruger A."/>
            <person name="Kummerfeld S.K."/>
            <person name="Kurochkin I.V."/>
            <person name="Lareau L.F."/>
            <person name="Lazarevic D."/>
            <person name="Lipovich L."/>
            <person name="Liu J."/>
            <person name="Liuni S."/>
            <person name="McWilliam S."/>
            <person name="Madan Babu M."/>
            <person name="Madera M."/>
            <person name="Marchionni L."/>
            <person name="Matsuda H."/>
            <person name="Matsuzawa S."/>
            <person name="Miki H."/>
            <person name="Mignone F."/>
            <person name="Miyake S."/>
            <person name="Morris K."/>
            <person name="Mottagui-Tabar S."/>
            <person name="Mulder N."/>
            <person name="Nakano N."/>
            <person name="Nakauchi H."/>
            <person name="Ng P."/>
            <person name="Nilsson R."/>
            <person name="Nishiguchi S."/>
            <person name="Nishikawa S."/>
            <person name="Nori F."/>
            <person name="Ohara O."/>
            <person name="Okazaki Y."/>
            <person name="Orlando V."/>
            <person name="Pang K.C."/>
            <person name="Pavan W.J."/>
            <person name="Pavesi G."/>
            <person name="Pesole G."/>
            <person name="Petrovsky N."/>
            <person name="Piazza S."/>
            <person name="Reed J."/>
            <person name="Reid J.F."/>
            <person name="Ring B.Z."/>
            <person name="Ringwald M."/>
            <person name="Rost B."/>
            <person name="Ruan Y."/>
            <person name="Salzberg S.L."/>
            <person name="Sandelin A."/>
            <person name="Schneider C."/>
            <person name="Schoenbach C."/>
            <person name="Sekiguchi K."/>
            <person name="Semple C.A."/>
            <person name="Seno S."/>
            <person name="Sessa L."/>
            <person name="Sheng Y."/>
            <person name="Shibata Y."/>
            <person name="Shimada H."/>
            <person name="Shimada K."/>
            <person name="Silva D."/>
            <person name="Sinclair B."/>
            <person name="Sperling S."/>
            <person name="Stupka E."/>
            <person name="Sugiura K."/>
            <person name="Sultana R."/>
            <person name="Takenaka Y."/>
            <person name="Taki K."/>
            <person name="Tammoja K."/>
            <person name="Tan S.L."/>
            <person name="Tang S."/>
            <person name="Taylor M.S."/>
            <person name="Tegner J."/>
            <person name="Teichmann S.A."/>
            <person name="Ueda H.R."/>
            <person name="van Nimwegen E."/>
            <person name="Verardo R."/>
            <person name="Wei C.L."/>
            <person name="Yagi K."/>
            <person name="Yamanishi H."/>
            <person name="Zabarovsky E."/>
            <person name="Zhu S."/>
            <person name="Zimmer A."/>
            <person name="Hide W."/>
            <person name="Bult C."/>
            <person name="Grimmond S.M."/>
            <person name="Teasdale R.D."/>
            <person name="Liu E.T."/>
            <person name="Brusic V."/>
            <person name="Quackenbush J."/>
            <person name="Wahlestedt C."/>
            <person name="Mattick J.S."/>
            <person name="Hume D.A."/>
            <person name="Kai C."/>
            <person name="Sasaki D."/>
            <person name="Tomaru Y."/>
            <person name="Fukuda S."/>
            <person name="Kanamori-Katayama M."/>
            <person name="Suzuki M."/>
            <person name="Aoki J."/>
            <person name="Arakawa T."/>
            <person name="Iida J."/>
            <person name="Imamura K."/>
            <person name="Itoh M."/>
            <person name="Kato T."/>
            <person name="Kawaji H."/>
            <person name="Kawagashira N."/>
            <person name="Kawashima T."/>
            <person name="Kojima M."/>
            <person name="Kondo S."/>
            <person name="Konno H."/>
            <person name="Nakano K."/>
            <person name="Ninomiya N."/>
            <person name="Nishio T."/>
            <person name="Okada M."/>
            <person name="Plessy C."/>
            <person name="Shibata K."/>
            <person name="Shiraki T."/>
            <person name="Suzuki S."/>
            <person name="Tagami M."/>
            <person name="Waki K."/>
            <person name="Watahiki A."/>
            <person name="Okamura-Oho Y."/>
            <person name="Suzuki H."/>
            <person name="Kawai J."/>
            <person name="Hayashizaki Y."/>
        </authorList>
    </citation>
    <scope>NUCLEOTIDE SEQUENCE [LARGE SCALE MRNA] (ISOFORMS 1 AND 4)</scope>
    <source>
        <strain>C57BL/6J</strain>
        <tissue>Pituitary</tissue>
        <tissue>Testis</tissue>
    </source>
</reference>
<reference key="3">
    <citation type="journal article" date="2004" name="Genome Res.">
        <title>The status, quality, and expansion of the NIH full-length cDNA project: the Mammalian Gene Collection (MGC).</title>
        <authorList>
            <consortium name="The MGC Project Team"/>
        </authorList>
    </citation>
    <scope>NUCLEOTIDE SEQUENCE [LARGE SCALE MRNA] (ISOFORMS 4 AND 5)</scope>
    <source>
        <tissue>Brain</tissue>
        <tissue>Mammary gland</tissue>
        <tissue>Testis</tissue>
    </source>
</reference>
<reference key="4">
    <citation type="journal article" date="2014" name="Mol. Biol. Cell">
        <title>The cytosolic carboxypeptidases CCP2 and CCP3 catalyze posttranslational removal of acidic amino acids.</title>
        <authorList>
            <person name="Tort O."/>
            <person name="Tanco S."/>
            <person name="Rocha C."/>
            <person name="Bieche I."/>
            <person name="Seixas C."/>
            <person name="Bosc C."/>
            <person name="Andrieux A."/>
            <person name="Moutin M.J."/>
            <person name="Aviles F.X."/>
            <person name="Lorenzo J."/>
            <person name="Janke C."/>
        </authorList>
    </citation>
    <scope>FUNCTION</scope>
    <scope>CATALYTIC ACTIVITY</scope>
    <scope>TISSUE SPECIFICITY</scope>
    <scope>INDUCTION</scope>
    <scope>DISRUPTION PHENOTYPE</scope>
    <scope>MUTAGENESIS OF GLU-540</scope>
</reference>
<feature type="chain" id="PRO_0000283752" description="Cytosolic carboxypeptidase 3">
    <location>
        <begin position="1"/>
        <end position="1006"/>
    </location>
</feature>
<feature type="domain" description="Peptidase M14" evidence="2">
    <location>
        <begin position="304"/>
        <end position="576"/>
    </location>
</feature>
<feature type="region of interest" description="Disordered" evidence="3">
    <location>
        <begin position="790"/>
        <end position="810"/>
    </location>
</feature>
<feature type="active site" description="Proton donor/acceptor" evidence="2">
    <location>
        <position position="540"/>
    </location>
</feature>
<feature type="binding site" evidence="2">
    <location>
        <position position="368"/>
    </location>
    <ligand>
        <name>Zn(2+)</name>
        <dbReference type="ChEBI" id="CHEBI:29105"/>
        <note>catalytic</note>
    </ligand>
</feature>
<feature type="binding site" evidence="2">
    <location>
        <position position="371"/>
    </location>
    <ligand>
        <name>Zn(2+)</name>
        <dbReference type="ChEBI" id="CHEBI:29105"/>
        <note>catalytic</note>
    </ligand>
</feature>
<feature type="binding site" evidence="2">
    <location>
        <position position="464"/>
    </location>
    <ligand>
        <name>Zn(2+)</name>
        <dbReference type="ChEBI" id="CHEBI:29105"/>
        <note>catalytic</note>
    </ligand>
</feature>
<feature type="splice variant" id="VSP_024374" description="In isoform 5." evidence="6">
    <original>EWTPFVPEPVYVPTGLEIEPVYPNSK</original>
    <variation>GMFLEVLGIQTLANLSILMLMRTLMM</variation>
    <location>
        <begin position="104"/>
        <end position="129"/>
    </location>
</feature>
<feature type="splice variant" id="VSP_024375" description="In isoform 5." evidence="6">
    <location>
        <begin position="130"/>
        <end position="1006"/>
    </location>
</feature>
<feature type="splice variant" id="VSP_024376" description="In isoform 2, isoform 3 and isoform 4." evidence="6 7 8">
    <location>
        <begin position="140"/>
        <end position="144"/>
    </location>
</feature>
<feature type="splice variant" id="VSP_024377" description="In isoform 4." evidence="6 7">
    <original>FSFSACKFNV</original>
    <variation>VRTFKTLTSL</variation>
    <location>
        <begin position="507"/>
        <end position="516"/>
    </location>
</feature>
<feature type="splice variant" id="VSP_024378" description="In isoform 4." evidence="6 7">
    <location>
        <begin position="517"/>
        <end position="1006"/>
    </location>
</feature>
<feature type="splice variant" id="VSP_024379" description="In isoform 2." evidence="8">
    <location>
        <begin position="867"/>
        <end position="1006"/>
    </location>
</feature>
<feature type="mutagenesis site" description="Abolishes deglutamylase activity." evidence="5">
    <original>E</original>
    <variation>A</variation>
    <location>
        <position position="540"/>
    </location>
</feature>
<keyword id="KW-0025">Alternative splicing</keyword>
<keyword id="KW-0121">Carboxypeptidase</keyword>
<keyword id="KW-0963">Cytoplasm</keyword>
<keyword id="KW-0378">Hydrolase</keyword>
<keyword id="KW-0479">Metal-binding</keyword>
<keyword id="KW-0482">Metalloprotease</keyword>
<keyword id="KW-0645">Protease</keyword>
<keyword id="KW-1185">Reference proteome</keyword>
<keyword id="KW-0862">Zinc</keyword>
<sequence length="1006" mass="116378">MSEDSEEEDYSDRSISDDDDLDEDSFMKFVSDDIHPCTLLAADSIGDPFFPRTTQILLEYQLGRWVPRLRGPRDLYGVSSSGPLSPTRWPYHCEVIDEKVQHIEWTPFVPEPVYVPTGLEIEPVYPNSKEDTVVYLAEDDHLCKAYKEPCFVYSRVGGNRTSLKQPVDNCDNTLVFEARFESGNLQKVVKVADHEYELTVRPDLFTNKHTQWYYFQVTNTQAEIVYRFTIVNFTKPASLYNRGMKPLFYSEKEAKTHNIGWQRIGDQIKYYKNNLGQDGRHFFSLTWTFQFPHSQDTCYFAHCYPYTYSNLQEYLSGINSDPVRSKFCKIRVLCHTLARNMVYVLTITTPLKTSDSKRKAVILTARVHPGETNSSWIMKGFLDYILGDSSDARLLRDTFIFKVVPMLNPDGVIVGNYRCSLAGRDLNRNYTSLLKESFPSVWYTRNMINRLMEKREVILYCDLHGHSRKQNIFMYGCDGSSRSKTKGLYLQQRIFPLMLSKNCPNIFSFSACKFNVQKSKEGTGRVVMWKMGIRNSFTLEATFCGSTLGNKRGTHFGTKDLESMGYHFCDSLLDYCDPDRSKYYQCLKELEEMEKHLSSERVSDNTDTSLVEISLDVESSSRGSDSSESNDTQTYLLKVTSQARNKKKYLKTKRERNAILANCQNNMQEVYGKEHLLQRHDESNSDGNDPRIDAPDVYVAHCFRRPLPNQGVVKIPGQRFYPGKTWSSSQRMIKSLNKDHRTCILETCKNPIQEVQSRGINIHESCFKMAKCPMNKRPSHWIEKTRIPTESHHQLKSKAKRCSSFQSKRTGTNWTDDEKRIYRDKRIAQTQEILKYLLPIVESSQNRKSTQMNNLINPIANLQQHQLIPTACINRRRYSIPWTPTRNLPFKAQRNLMTDTSEWLQSVPLGSFESLLPLCNLQKKTKHFELWGKKAKDVQLATSQWEAVPLSSNMDASIIRGNSVLQPKEFTMRSSKQRIPYLTKTSKKPSESDGLLTFQLKIHRNS</sequence>
<evidence type="ECO:0000250" key="1"/>
<evidence type="ECO:0000255" key="2">
    <source>
        <dbReference type="PROSITE-ProRule" id="PRU01379"/>
    </source>
</evidence>
<evidence type="ECO:0000256" key="3">
    <source>
        <dbReference type="SAM" id="MobiDB-lite"/>
    </source>
</evidence>
<evidence type="ECO:0000269" key="4">
    <source>
    </source>
</evidence>
<evidence type="ECO:0000269" key="5">
    <source>
    </source>
</evidence>
<evidence type="ECO:0000303" key="6">
    <source>
    </source>
</evidence>
<evidence type="ECO:0000303" key="7">
    <source>
    </source>
</evidence>
<evidence type="ECO:0000303" key="8">
    <source>
    </source>
</evidence>
<evidence type="ECO:0000303" key="9">
    <source>
    </source>
</evidence>
<evidence type="ECO:0000305" key="10"/>
<evidence type="ECO:0000305" key="11">
    <source>
    </source>
</evidence>
<evidence type="ECO:0000312" key="12">
    <source>
        <dbReference type="MGI" id="MGI:1923473"/>
    </source>
</evidence>
<dbReference type="EC" id="3.4.17.-" evidence="5"/>
<dbReference type="EMBL" id="DQ867031">
    <property type="protein sequence ID" value="ABI51950.1"/>
    <property type="molecule type" value="mRNA"/>
</dbReference>
<dbReference type="EMBL" id="DQ867032">
    <property type="protein sequence ID" value="ABI51951.1"/>
    <property type="molecule type" value="mRNA"/>
</dbReference>
<dbReference type="EMBL" id="AK029793">
    <property type="protein sequence ID" value="BAC26620.1"/>
    <property type="molecule type" value="mRNA"/>
</dbReference>
<dbReference type="EMBL" id="AK030378">
    <property type="protein sequence ID" value="BAC26932.1"/>
    <property type="molecule type" value="mRNA"/>
</dbReference>
<dbReference type="EMBL" id="BC028521">
    <property type="protein sequence ID" value="AAH28521.1"/>
    <property type="molecule type" value="mRNA"/>
</dbReference>
<dbReference type="EMBL" id="BC087897">
    <property type="protein sequence ID" value="AAH87897.1"/>
    <property type="molecule type" value="mRNA"/>
</dbReference>
<dbReference type="EMBL" id="BC139065">
    <property type="protein sequence ID" value="AAI39066.1"/>
    <property type="molecule type" value="mRNA"/>
</dbReference>
<dbReference type="CCDS" id="CCDS19995.2">
    <molecule id="Q8CDP0-3"/>
</dbReference>
<dbReference type="CCDS" id="CCDS80515.1">
    <molecule id="Q8CDP0-1"/>
</dbReference>
<dbReference type="CCDS" id="CCDS80516.1">
    <molecule id="Q8CDP0-5"/>
</dbReference>
<dbReference type="RefSeq" id="NP_001276585.1">
    <molecule id="Q8CDP0-1"/>
    <property type="nucleotide sequence ID" value="NM_001289656.1"/>
</dbReference>
<dbReference type="RefSeq" id="NP_001276586.1">
    <property type="nucleotide sequence ID" value="NM_001289657.1"/>
</dbReference>
<dbReference type="RefSeq" id="NP_001276587.1">
    <molecule id="Q8CDP0-5"/>
    <property type="nucleotide sequence ID" value="NM_001289658.1"/>
</dbReference>
<dbReference type="RefSeq" id="NP_848745.2">
    <molecule id="Q8CDP0-3"/>
    <property type="nucleotide sequence ID" value="NM_178630.4"/>
</dbReference>
<dbReference type="RefSeq" id="XP_030111518.1">
    <molecule id="Q8CDP0-3"/>
    <property type="nucleotide sequence ID" value="XM_030255658.2"/>
</dbReference>
<dbReference type="SMR" id="Q8CDP0"/>
<dbReference type="BioGRID" id="218035">
    <property type="interactions" value="1"/>
</dbReference>
<dbReference type="FunCoup" id="Q8CDP0">
    <property type="interactions" value="435"/>
</dbReference>
<dbReference type="STRING" id="10090.ENSMUSP00000110668"/>
<dbReference type="MEROPS" id="M14.026"/>
<dbReference type="iPTMnet" id="Q8CDP0"/>
<dbReference type="PhosphoSitePlus" id="Q8CDP0"/>
<dbReference type="PaxDb" id="10090-ENSMUSP00000110669"/>
<dbReference type="ProteomicsDB" id="265349">
    <molecule id="Q8CDP0-1"/>
</dbReference>
<dbReference type="ProteomicsDB" id="265350">
    <molecule id="Q8CDP0-2"/>
</dbReference>
<dbReference type="ProteomicsDB" id="265351">
    <molecule id="Q8CDP0-3"/>
</dbReference>
<dbReference type="Antibodypedia" id="9809">
    <property type="antibodies" value="63 antibodies from 21 providers"/>
</dbReference>
<dbReference type="DNASU" id="76223"/>
<dbReference type="Ensembl" id="ENSMUST00000115014.8">
    <molecule id="Q8CDP0-5"/>
    <property type="protein sequence ID" value="ENSMUSP00000110666.2"/>
    <property type="gene ID" value="ENSMUSG00000038836.16"/>
</dbReference>
<dbReference type="Ensembl" id="ENSMUST00000115016.8">
    <molecule id="Q8CDP0-1"/>
    <property type="protein sequence ID" value="ENSMUSP00000110668.2"/>
    <property type="gene ID" value="ENSMUSG00000038836.16"/>
</dbReference>
<dbReference type="Ensembl" id="ENSMUST00000115017.8">
    <molecule id="Q8CDP0-3"/>
    <property type="protein sequence ID" value="ENSMUSP00000110669.2"/>
    <property type="gene ID" value="ENSMUSG00000038836.16"/>
</dbReference>
<dbReference type="GeneID" id="76223"/>
<dbReference type="KEGG" id="mmu:76223"/>
<dbReference type="UCSC" id="uc009bhm.2">
    <molecule id="Q8CDP0-5"/>
    <property type="organism name" value="mouse"/>
</dbReference>
<dbReference type="UCSC" id="uc009bhp.1">
    <molecule id="Q8CDP0-4"/>
    <property type="organism name" value="mouse"/>
</dbReference>
<dbReference type="UCSC" id="uc009bhq.1">
    <molecule id="Q8CDP0-2"/>
    <property type="organism name" value="mouse"/>
</dbReference>
<dbReference type="UCSC" id="uc009bhr.2">
    <molecule id="Q8CDP0-3"/>
    <property type="organism name" value="mouse"/>
</dbReference>
<dbReference type="UCSC" id="uc009bhs.2">
    <molecule id="Q8CDP0-1"/>
    <property type="organism name" value="mouse"/>
</dbReference>
<dbReference type="AGR" id="MGI:1923473"/>
<dbReference type="CTD" id="340351"/>
<dbReference type="MGI" id="MGI:1923473">
    <property type="gene designation" value="Agbl3"/>
</dbReference>
<dbReference type="VEuPathDB" id="HostDB:ENSMUSG00000038836"/>
<dbReference type="eggNOG" id="KOG1814">
    <property type="taxonomic scope" value="Eukaryota"/>
</dbReference>
<dbReference type="eggNOG" id="KOG3641">
    <property type="taxonomic scope" value="Eukaryota"/>
</dbReference>
<dbReference type="GeneTree" id="ENSGT00940000160916"/>
<dbReference type="HOGENOM" id="CLU_318835_0_0_1"/>
<dbReference type="InParanoid" id="Q8CDP0"/>
<dbReference type="OMA" id="HIXYKEP"/>
<dbReference type="OrthoDB" id="10253041at2759"/>
<dbReference type="PhylomeDB" id="Q8CDP0"/>
<dbReference type="TreeFam" id="TF313794"/>
<dbReference type="BioGRID-ORCS" id="76223">
    <property type="hits" value="4 hits in 77 CRISPR screens"/>
</dbReference>
<dbReference type="PRO" id="PR:Q8CDP0"/>
<dbReference type="Proteomes" id="UP000000589">
    <property type="component" value="Chromosome 6"/>
</dbReference>
<dbReference type="RNAct" id="Q8CDP0">
    <property type="molecule type" value="protein"/>
</dbReference>
<dbReference type="Bgee" id="ENSMUSG00000038836">
    <property type="expression patterns" value="Expressed in spermatid and 136 other cell types or tissues"/>
</dbReference>
<dbReference type="ExpressionAtlas" id="Q8CDP0">
    <property type="expression patterns" value="baseline and differential"/>
</dbReference>
<dbReference type="GO" id="GO:0005829">
    <property type="term" value="C:cytosol"/>
    <property type="evidence" value="ECO:0000304"/>
    <property type="project" value="Reactome"/>
</dbReference>
<dbReference type="GO" id="GO:0004181">
    <property type="term" value="F:metallocarboxypeptidase activity"/>
    <property type="evidence" value="ECO:0000314"/>
    <property type="project" value="UniProtKB"/>
</dbReference>
<dbReference type="GO" id="GO:0008270">
    <property type="term" value="F:zinc ion binding"/>
    <property type="evidence" value="ECO:0007669"/>
    <property type="project" value="InterPro"/>
</dbReference>
<dbReference type="GO" id="GO:0035610">
    <property type="term" value="P:protein side chain deglutamylation"/>
    <property type="evidence" value="ECO:0000314"/>
    <property type="project" value="UniProtKB"/>
</dbReference>
<dbReference type="GO" id="GO:0006508">
    <property type="term" value="P:proteolysis"/>
    <property type="evidence" value="ECO:0007669"/>
    <property type="project" value="UniProtKB-KW"/>
</dbReference>
<dbReference type="CDD" id="cd06907">
    <property type="entry name" value="M14_AGBL2-3_like"/>
    <property type="match status" value="1"/>
</dbReference>
<dbReference type="FunFam" id="2.60.40.3120:FF:000001">
    <property type="entry name" value="cytosolic carboxypeptidase 1 isoform X1"/>
    <property type="match status" value="1"/>
</dbReference>
<dbReference type="FunFam" id="3.40.630.10:FF:000011">
    <property type="entry name" value="cytosolic carboxypeptidase 2 isoform X1"/>
    <property type="match status" value="1"/>
</dbReference>
<dbReference type="Gene3D" id="2.60.40.3120">
    <property type="match status" value="1"/>
</dbReference>
<dbReference type="Gene3D" id="3.40.630.10">
    <property type="entry name" value="Zn peptidases"/>
    <property type="match status" value="1"/>
</dbReference>
<dbReference type="InterPro" id="IPR050821">
    <property type="entry name" value="Cytosolic_carboxypeptidase"/>
</dbReference>
<dbReference type="InterPro" id="IPR040626">
    <property type="entry name" value="Pepdidase_M14_N"/>
</dbReference>
<dbReference type="InterPro" id="IPR000834">
    <property type="entry name" value="Peptidase_M14"/>
</dbReference>
<dbReference type="PANTHER" id="PTHR12756">
    <property type="entry name" value="CYTOSOLIC CARBOXYPEPTIDASE"/>
    <property type="match status" value="1"/>
</dbReference>
<dbReference type="PANTHER" id="PTHR12756:SF23">
    <property type="entry name" value="CYTOSOLIC CARBOXYPEPTIDASE 3"/>
    <property type="match status" value="1"/>
</dbReference>
<dbReference type="Pfam" id="PF18027">
    <property type="entry name" value="Pepdidase_M14_N"/>
    <property type="match status" value="1"/>
</dbReference>
<dbReference type="Pfam" id="PF00246">
    <property type="entry name" value="Peptidase_M14"/>
    <property type="match status" value="1"/>
</dbReference>
<dbReference type="SUPFAM" id="SSF53187">
    <property type="entry name" value="Zn-dependent exopeptidases"/>
    <property type="match status" value="1"/>
</dbReference>
<dbReference type="PROSITE" id="PS52035">
    <property type="entry name" value="PEPTIDASE_M14"/>
    <property type="match status" value="1"/>
</dbReference>
<name>CBPC3_MOUSE</name>
<comment type="function">
    <text evidence="5">Metallocarboxypeptidase that mediates deglutamylation of tubulin and non-tubulin target proteins (PubMed:25103237). Catalyzes the removal of polyglutamate side chains present on the gamma-carboxyl group of glutamate residues within the C-terminal tail of tubulin protein (PubMed:25103237). Specifically cleaves tubulin long-side-chains, while it is not able to remove the branching point glutamate (PubMed:25103237). Also catalyzes the removal of polyglutamate residues from the carboxy-terminus of non-tubulin proteins such as MYLK (PubMed:25103237). May catalyze the hydrolysis of aspartate from the carboxy-terminus of target proteins (PubMed:25103237). Does not show detyrosinase or deglycylase activities from the carboxy-terminus of target proteins (PubMed:25103237).</text>
</comment>
<comment type="catalytic activity">
    <reaction evidence="5">
        <text>(L-glutamyl)(n+1)-gamma-L-glutamyl-L-glutamyl-[protein] + H2O = (L-glutamyl)(n)-gamma-L-glutamyl-L-glutamyl-[protein] + L-glutamate</text>
        <dbReference type="Rhea" id="RHEA:60004"/>
        <dbReference type="Rhea" id="RHEA-COMP:15519"/>
        <dbReference type="Rhea" id="RHEA-COMP:15675"/>
        <dbReference type="ChEBI" id="CHEBI:15377"/>
        <dbReference type="ChEBI" id="CHEBI:29985"/>
        <dbReference type="ChEBI" id="CHEBI:143623"/>
    </reaction>
    <physiologicalReaction direction="left-to-right" evidence="11">
        <dbReference type="Rhea" id="RHEA:60005"/>
    </physiologicalReaction>
</comment>
<comment type="cofactor">
    <cofactor evidence="1">
        <name>Zn(2+)</name>
        <dbReference type="ChEBI" id="CHEBI:29105"/>
    </cofactor>
    <text evidence="1">Binds 1 zinc ion per subunit.</text>
</comment>
<comment type="subcellular location">
    <subcellularLocation>
        <location evidence="4">Cytoplasm</location>
        <location evidence="4">Cytosol</location>
    </subcellularLocation>
</comment>
<comment type="alternative products">
    <event type="alternative splicing"/>
    <isoform>
        <id>Q8CDP0-1</id>
        <name>1</name>
        <sequence type="displayed"/>
    </isoform>
    <isoform>
        <id>Q8CDP0-2</id>
        <name>2</name>
        <sequence type="described" ref="VSP_024376 VSP_024379"/>
    </isoform>
    <isoform>
        <id>Q8CDP0-3</id>
        <name>3</name>
        <sequence type="described" ref="VSP_024376"/>
    </isoform>
    <isoform>
        <id>Q8CDP0-4</id>
        <name>4</name>
        <sequence type="described" ref="VSP_024376 VSP_024377 VSP_024378"/>
    </isoform>
    <isoform>
        <id>Q8CDP0-5</id>
        <name>5</name>
        <sequence type="described" ref="VSP_024374 VSP_024375"/>
    </isoform>
</comment>
<comment type="tissue specificity">
    <text evidence="4 5">Widely expressed. Expressed abundantly in tissues with m otile cilia such as testis, lung and trachea. Abundantly expressed in pituitary and kidney, moderately expressed in brain, eye, fat, pancreas, stomach, and adrenal.</text>
</comment>
<comment type="induction">
    <text evidence="5">Up-regulated during ciliogenesis.</text>
</comment>
<comment type="disruption phenotype">
    <text evidence="5">AGBL2 and AGBL3 double knockout mutant mice are viable and display no obvious phenotypic alterations. Show an increase in tubulin and MYLK polyglutamylation in sperm.</text>
</comment>
<comment type="similarity">
    <text evidence="10">Belongs to the peptidase M14 family.</text>
</comment>
<organism>
    <name type="scientific">Mus musculus</name>
    <name type="common">Mouse</name>
    <dbReference type="NCBI Taxonomy" id="10090"/>
    <lineage>
        <taxon>Eukaryota</taxon>
        <taxon>Metazoa</taxon>
        <taxon>Chordata</taxon>
        <taxon>Craniata</taxon>
        <taxon>Vertebrata</taxon>
        <taxon>Euteleostomi</taxon>
        <taxon>Mammalia</taxon>
        <taxon>Eutheria</taxon>
        <taxon>Euarchontoglires</taxon>
        <taxon>Glires</taxon>
        <taxon>Rodentia</taxon>
        <taxon>Myomorpha</taxon>
        <taxon>Muroidea</taxon>
        <taxon>Muridae</taxon>
        <taxon>Murinae</taxon>
        <taxon>Mus</taxon>
        <taxon>Mus</taxon>
    </lineage>
</organism>